<gene>
    <name evidence="1" type="primary">truD</name>
    <name type="ordered locus">YE0771</name>
</gene>
<evidence type="ECO:0000255" key="1">
    <source>
        <dbReference type="HAMAP-Rule" id="MF_01082"/>
    </source>
</evidence>
<reference key="1">
    <citation type="journal article" date="2006" name="PLoS Genet.">
        <title>The complete genome sequence and comparative genome analysis of the high pathogenicity Yersinia enterocolitica strain 8081.</title>
        <authorList>
            <person name="Thomson N.R."/>
            <person name="Howard S."/>
            <person name="Wren B.W."/>
            <person name="Holden M.T.G."/>
            <person name="Crossman L."/>
            <person name="Challis G.L."/>
            <person name="Churcher C."/>
            <person name="Mungall K."/>
            <person name="Brooks K."/>
            <person name="Chillingworth T."/>
            <person name="Feltwell T."/>
            <person name="Abdellah Z."/>
            <person name="Hauser H."/>
            <person name="Jagels K."/>
            <person name="Maddison M."/>
            <person name="Moule S."/>
            <person name="Sanders M."/>
            <person name="Whitehead S."/>
            <person name="Quail M.A."/>
            <person name="Dougan G."/>
            <person name="Parkhill J."/>
            <person name="Prentice M.B."/>
        </authorList>
    </citation>
    <scope>NUCLEOTIDE SEQUENCE [LARGE SCALE GENOMIC DNA]</scope>
    <source>
        <strain>NCTC 13174 / 8081</strain>
    </source>
</reference>
<sequence length="349" mass="38857">MDMDNLTWLHGKPKASGVLKANPEDFVVVEDLGFEPDGEGEHLLVRIRKHGCNTQFVADYLARFAKIHPRLVSYAGLKDRHAVTEQWFCLHLPGKEAPDLSTFELEGCEVLESVRQKRKLRIGSLKGNAFTLVLRHITDNQDVEQRLQQIAAHGVPNYFGSQRFGRGGNNLVLARLWANNEIRVKERSKRSFYLSASRSAMFNLISSDRLAQQQATTVLEGDALQLSGRGSWFVAAADELALLQQRVDAGELNITAPLPGDGELGTQGAALAFEQACLADQTELLALIKRERVEGARRAILLKPQNIAWNWWDEVTLELSFWLPAGSFATSVVREIMNQDNADAADIAE</sequence>
<proteinExistence type="inferred from homology"/>
<protein>
    <recommendedName>
        <fullName evidence="1">tRNA pseudouridine synthase D</fullName>
        <ecNumber evidence="1">5.4.99.27</ecNumber>
    </recommendedName>
    <alternativeName>
        <fullName evidence="1">tRNA pseudouridine(13) synthase</fullName>
    </alternativeName>
    <alternativeName>
        <fullName evidence="1">tRNA pseudouridylate synthase D</fullName>
    </alternativeName>
    <alternativeName>
        <fullName evidence="1">tRNA-uridine isomerase D</fullName>
    </alternativeName>
</protein>
<comment type="function">
    <text evidence="1">Responsible for synthesis of pseudouridine from uracil-13 in transfer RNAs.</text>
</comment>
<comment type="catalytic activity">
    <reaction evidence="1">
        <text>uridine(13) in tRNA = pseudouridine(13) in tRNA</text>
        <dbReference type="Rhea" id="RHEA:42540"/>
        <dbReference type="Rhea" id="RHEA-COMP:10105"/>
        <dbReference type="Rhea" id="RHEA-COMP:10106"/>
        <dbReference type="ChEBI" id="CHEBI:65314"/>
        <dbReference type="ChEBI" id="CHEBI:65315"/>
        <dbReference type="EC" id="5.4.99.27"/>
    </reaction>
</comment>
<comment type="similarity">
    <text evidence="1">Belongs to the pseudouridine synthase TruD family.</text>
</comment>
<feature type="chain" id="PRO_1000084769" description="tRNA pseudouridine synthase D">
    <location>
        <begin position="1"/>
        <end position="349"/>
    </location>
</feature>
<feature type="domain" description="TRUD" evidence="1">
    <location>
        <begin position="154"/>
        <end position="302"/>
    </location>
</feature>
<feature type="active site" description="Nucleophile" evidence="1">
    <location>
        <position position="79"/>
    </location>
</feature>
<feature type="binding site" evidence="1">
    <location>
        <position position="26"/>
    </location>
    <ligand>
        <name>substrate</name>
    </ligand>
</feature>
<feature type="binding site" evidence="1">
    <location>
        <position position="128"/>
    </location>
    <ligand>
        <name>substrate</name>
    </ligand>
</feature>
<feature type="binding site" evidence="1">
    <location>
        <position position="328"/>
    </location>
    <ligand>
        <name>substrate</name>
    </ligand>
</feature>
<accession>A1JJT6</accession>
<organism>
    <name type="scientific">Yersinia enterocolitica serotype O:8 / biotype 1B (strain NCTC 13174 / 8081)</name>
    <dbReference type="NCBI Taxonomy" id="393305"/>
    <lineage>
        <taxon>Bacteria</taxon>
        <taxon>Pseudomonadati</taxon>
        <taxon>Pseudomonadota</taxon>
        <taxon>Gammaproteobacteria</taxon>
        <taxon>Enterobacterales</taxon>
        <taxon>Yersiniaceae</taxon>
        <taxon>Yersinia</taxon>
    </lineage>
</organism>
<name>TRUD_YERE8</name>
<dbReference type="EC" id="5.4.99.27" evidence="1"/>
<dbReference type="EMBL" id="AM286415">
    <property type="protein sequence ID" value="CAL10873.1"/>
    <property type="molecule type" value="Genomic_DNA"/>
</dbReference>
<dbReference type="RefSeq" id="WP_011815611.1">
    <property type="nucleotide sequence ID" value="NC_008800.1"/>
</dbReference>
<dbReference type="RefSeq" id="YP_001005112.1">
    <property type="nucleotide sequence ID" value="NC_008800.1"/>
</dbReference>
<dbReference type="SMR" id="A1JJT6"/>
<dbReference type="KEGG" id="yen:YE0771"/>
<dbReference type="PATRIC" id="fig|393305.7.peg.864"/>
<dbReference type="eggNOG" id="COG0585">
    <property type="taxonomic scope" value="Bacteria"/>
</dbReference>
<dbReference type="HOGENOM" id="CLU_005281_4_0_6"/>
<dbReference type="OrthoDB" id="1550679at2"/>
<dbReference type="Proteomes" id="UP000000642">
    <property type="component" value="Chromosome"/>
</dbReference>
<dbReference type="GO" id="GO:0005829">
    <property type="term" value="C:cytosol"/>
    <property type="evidence" value="ECO:0007669"/>
    <property type="project" value="TreeGrafter"/>
</dbReference>
<dbReference type="GO" id="GO:0003723">
    <property type="term" value="F:RNA binding"/>
    <property type="evidence" value="ECO:0007669"/>
    <property type="project" value="InterPro"/>
</dbReference>
<dbReference type="GO" id="GO:0160150">
    <property type="term" value="F:tRNA pseudouridine(13) synthase activity"/>
    <property type="evidence" value="ECO:0007669"/>
    <property type="project" value="UniProtKB-EC"/>
</dbReference>
<dbReference type="GO" id="GO:0031119">
    <property type="term" value="P:tRNA pseudouridine synthesis"/>
    <property type="evidence" value="ECO:0007669"/>
    <property type="project" value="UniProtKB-UniRule"/>
</dbReference>
<dbReference type="CDD" id="cd02575">
    <property type="entry name" value="PseudoU_synth_EcTruD"/>
    <property type="match status" value="1"/>
</dbReference>
<dbReference type="FunFam" id="3.30.2340.10:FF:000001">
    <property type="entry name" value="tRNA pseudouridine synthase D"/>
    <property type="match status" value="1"/>
</dbReference>
<dbReference type="FunFam" id="3.30.2350.20:FF:000001">
    <property type="entry name" value="tRNA pseudouridine synthase D"/>
    <property type="match status" value="1"/>
</dbReference>
<dbReference type="Gene3D" id="3.30.2350.20">
    <property type="entry name" value="TruD, catalytic domain"/>
    <property type="match status" value="1"/>
</dbReference>
<dbReference type="Gene3D" id="3.30.2340.10">
    <property type="entry name" value="TruD, insertion domain"/>
    <property type="match status" value="1"/>
</dbReference>
<dbReference type="HAMAP" id="MF_01082">
    <property type="entry name" value="TruD"/>
    <property type="match status" value="1"/>
</dbReference>
<dbReference type="InterPro" id="IPR020103">
    <property type="entry name" value="PsdUridine_synth_cat_dom_sf"/>
</dbReference>
<dbReference type="InterPro" id="IPR001656">
    <property type="entry name" value="PsdUridine_synth_TruD"/>
</dbReference>
<dbReference type="InterPro" id="IPR020119">
    <property type="entry name" value="PsdUridine_synth_TruD_CS"/>
</dbReference>
<dbReference type="InterPro" id="IPR011760">
    <property type="entry name" value="PsdUridine_synth_TruD_insert"/>
</dbReference>
<dbReference type="InterPro" id="IPR042214">
    <property type="entry name" value="TruD_catalytic"/>
</dbReference>
<dbReference type="InterPro" id="IPR043165">
    <property type="entry name" value="TruD_insert_sf"/>
</dbReference>
<dbReference type="InterPro" id="IPR050170">
    <property type="entry name" value="TruD_pseudoU_synthase"/>
</dbReference>
<dbReference type="NCBIfam" id="NF002155">
    <property type="entry name" value="PRK00984.1-4"/>
    <property type="match status" value="1"/>
</dbReference>
<dbReference type="NCBIfam" id="TIGR00094">
    <property type="entry name" value="tRNA_TruD_broad"/>
    <property type="match status" value="1"/>
</dbReference>
<dbReference type="PANTHER" id="PTHR47811">
    <property type="entry name" value="TRNA PSEUDOURIDINE SYNTHASE D"/>
    <property type="match status" value="1"/>
</dbReference>
<dbReference type="PANTHER" id="PTHR47811:SF1">
    <property type="entry name" value="TRNA PSEUDOURIDINE SYNTHASE D"/>
    <property type="match status" value="1"/>
</dbReference>
<dbReference type="Pfam" id="PF01142">
    <property type="entry name" value="TruD"/>
    <property type="match status" value="2"/>
</dbReference>
<dbReference type="SUPFAM" id="SSF55120">
    <property type="entry name" value="Pseudouridine synthase"/>
    <property type="match status" value="1"/>
</dbReference>
<dbReference type="PROSITE" id="PS50984">
    <property type="entry name" value="TRUD"/>
    <property type="match status" value="1"/>
</dbReference>
<dbReference type="PROSITE" id="PS01268">
    <property type="entry name" value="UPF0024"/>
    <property type="match status" value="1"/>
</dbReference>
<keyword id="KW-0413">Isomerase</keyword>
<keyword id="KW-0819">tRNA processing</keyword>